<proteinExistence type="inferred from homology"/>
<accession>Q8YHZ7</accession>
<dbReference type="EC" id="3.5.1.5" evidence="1"/>
<dbReference type="EMBL" id="AE008917">
    <property type="protein sequence ID" value="AAL51829.1"/>
    <property type="molecule type" value="Genomic_DNA"/>
</dbReference>
<dbReference type="PIR" id="AB3333">
    <property type="entry name" value="AB3333"/>
</dbReference>
<dbReference type="RefSeq" id="WP_002964470.1">
    <property type="nucleotide sequence ID" value="NZ_GG703780.1"/>
</dbReference>
<dbReference type="SMR" id="Q8YHZ7"/>
<dbReference type="KEGG" id="bme:BMEI0648"/>
<dbReference type="KEGG" id="bmel:DK63_779"/>
<dbReference type="PATRIC" id="fig|224914.52.peg.816"/>
<dbReference type="eggNOG" id="COG0832">
    <property type="taxonomic scope" value="Bacteria"/>
</dbReference>
<dbReference type="PhylomeDB" id="Q8YHZ7"/>
<dbReference type="UniPathway" id="UPA00258">
    <property type="reaction ID" value="UER00370"/>
</dbReference>
<dbReference type="Proteomes" id="UP000000419">
    <property type="component" value="Chromosome I"/>
</dbReference>
<dbReference type="GO" id="GO:0035550">
    <property type="term" value="C:urease complex"/>
    <property type="evidence" value="ECO:0007669"/>
    <property type="project" value="InterPro"/>
</dbReference>
<dbReference type="GO" id="GO:0009039">
    <property type="term" value="F:urease activity"/>
    <property type="evidence" value="ECO:0007669"/>
    <property type="project" value="UniProtKB-UniRule"/>
</dbReference>
<dbReference type="GO" id="GO:0043419">
    <property type="term" value="P:urea catabolic process"/>
    <property type="evidence" value="ECO:0007669"/>
    <property type="project" value="UniProtKB-UniRule"/>
</dbReference>
<dbReference type="CDD" id="cd00407">
    <property type="entry name" value="Urease_beta"/>
    <property type="match status" value="1"/>
</dbReference>
<dbReference type="FunFam" id="2.10.150.10:FF:000001">
    <property type="entry name" value="Urease subunit beta"/>
    <property type="match status" value="1"/>
</dbReference>
<dbReference type="Gene3D" id="2.10.150.10">
    <property type="entry name" value="Urease, beta subunit"/>
    <property type="match status" value="1"/>
</dbReference>
<dbReference type="HAMAP" id="MF_01954">
    <property type="entry name" value="Urease_beta"/>
    <property type="match status" value="1"/>
</dbReference>
<dbReference type="InterPro" id="IPR002019">
    <property type="entry name" value="Urease_beta-like"/>
</dbReference>
<dbReference type="InterPro" id="IPR036461">
    <property type="entry name" value="Urease_betasu_sf"/>
</dbReference>
<dbReference type="InterPro" id="IPR050069">
    <property type="entry name" value="Urease_subunit"/>
</dbReference>
<dbReference type="NCBIfam" id="NF009682">
    <property type="entry name" value="PRK13203.1"/>
    <property type="match status" value="1"/>
</dbReference>
<dbReference type="NCBIfam" id="TIGR00192">
    <property type="entry name" value="urease_beta"/>
    <property type="match status" value="1"/>
</dbReference>
<dbReference type="PANTHER" id="PTHR33569">
    <property type="entry name" value="UREASE"/>
    <property type="match status" value="1"/>
</dbReference>
<dbReference type="PANTHER" id="PTHR33569:SF1">
    <property type="entry name" value="UREASE"/>
    <property type="match status" value="1"/>
</dbReference>
<dbReference type="Pfam" id="PF00699">
    <property type="entry name" value="Urease_beta"/>
    <property type="match status" value="1"/>
</dbReference>
<dbReference type="SUPFAM" id="SSF51278">
    <property type="entry name" value="Urease, beta-subunit"/>
    <property type="match status" value="1"/>
</dbReference>
<protein>
    <recommendedName>
        <fullName evidence="1">Urease subunit beta 2</fullName>
        <ecNumber evidence="1">3.5.1.5</ecNumber>
    </recommendedName>
    <alternativeName>
        <fullName evidence="1">Urea amidohydrolase subunit beta 1</fullName>
    </alternativeName>
</protein>
<evidence type="ECO:0000255" key="1">
    <source>
        <dbReference type="HAMAP-Rule" id="MF_01954"/>
    </source>
</evidence>
<evidence type="ECO:0000256" key="2">
    <source>
        <dbReference type="SAM" id="MobiDB-lite"/>
    </source>
</evidence>
<reference key="1">
    <citation type="journal article" date="2002" name="Proc. Natl. Acad. Sci. U.S.A.">
        <title>The genome sequence of the facultative intracellular pathogen Brucella melitensis.</title>
        <authorList>
            <person name="DelVecchio V.G."/>
            <person name="Kapatral V."/>
            <person name="Redkar R.J."/>
            <person name="Patra G."/>
            <person name="Mujer C."/>
            <person name="Los T."/>
            <person name="Ivanova N."/>
            <person name="Anderson I."/>
            <person name="Bhattacharyya A."/>
            <person name="Lykidis A."/>
            <person name="Reznik G."/>
            <person name="Jablonski L."/>
            <person name="Larsen N."/>
            <person name="D'Souza M."/>
            <person name="Bernal A."/>
            <person name="Mazur M."/>
            <person name="Goltsman E."/>
            <person name="Selkov E."/>
            <person name="Elzer P.H."/>
            <person name="Hagius S."/>
            <person name="O'Callaghan D."/>
            <person name="Letesson J.-J."/>
            <person name="Haselkorn R."/>
            <person name="Kyrpides N.C."/>
            <person name="Overbeek R."/>
        </authorList>
    </citation>
    <scope>NUCLEOTIDE SEQUENCE [LARGE SCALE GENOMIC DNA]</scope>
    <source>
        <strain>ATCC 23456 / CCUG 17765 / NCTC 10094 / 16M</strain>
    </source>
</reference>
<keyword id="KW-0963">Cytoplasm</keyword>
<keyword id="KW-0378">Hydrolase</keyword>
<comment type="catalytic activity">
    <reaction evidence="1">
        <text>urea + 2 H2O + H(+) = hydrogencarbonate + 2 NH4(+)</text>
        <dbReference type="Rhea" id="RHEA:20557"/>
        <dbReference type="ChEBI" id="CHEBI:15377"/>
        <dbReference type="ChEBI" id="CHEBI:15378"/>
        <dbReference type="ChEBI" id="CHEBI:16199"/>
        <dbReference type="ChEBI" id="CHEBI:17544"/>
        <dbReference type="ChEBI" id="CHEBI:28938"/>
        <dbReference type="EC" id="3.5.1.5"/>
    </reaction>
</comment>
<comment type="pathway">
    <text evidence="1">Nitrogen metabolism; urea degradation; CO(2) and NH(3) from urea (urease route): step 1/1.</text>
</comment>
<comment type="subunit">
    <text evidence="1">Heterotrimer of UreA (gamma), UreB (beta) and UreC (alpha) subunits. Three heterotrimers associate to form the active enzyme.</text>
</comment>
<comment type="subcellular location">
    <subcellularLocation>
        <location evidence="1">Cytoplasm</location>
    </subcellularLocation>
</comment>
<comment type="similarity">
    <text evidence="1">Belongs to the urease beta subunit family.</text>
</comment>
<organism>
    <name type="scientific">Brucella melitensis biotype 1 (strain ATCC 23456 / CCUG 17765 / NCTC 10094 / 16M)</name>
    <dbReference type="NCBI Taxonomy" id="224914"/>
    <lineage>
        <taxon>Bacteria</taxon>
        <taxon>Pseudomonadati</taxon>
        <taxon>Pseudomonadota</taxon>
        <taxon>Alphaproteobacteria</taxon>
        <taxon>Hyphomicrobiales</taxon>
        <taxon>Brucellaceae</taxon>
        <taxon>Brucella/Ochrobactrum group</taxon>
        <taxon>Brucella</taxon>
    </lineage>
</organism>
<feature type="chain" id="PRO_0000234237" description="Urease subunit beta 2">
    <location>
        <begin position="1"/>
        <end position="159"/>
    </location>
</feature>
<feature type="region of interest" description="Disordered" evidence="2">
    <location>
        <begin position="1"/>
        <end position="23"/>
    </location>
</feature>
<name>URE22_BRUME</name>
<gene>
    <name evidence="1" type="primary">ureB2</name>
    <name type="ordered locus">BMEI0648</name>
</gene>
<sequence>MAKEPTEAAHPQPEQTKTNHKAHRPVGGYVLAKDPIEINQGRPRTTLTVRNTGDRPIQIGSHFHFFEVNRYLEFDRSKAFGLRLDIPANTAVRFEPGDEKEVTLVPFAGKRFIFGFNNLVDGWSGDGPTPDYQPNREIAAERAEKLGFKSCKSGGKDAK</sequence>